<sequence>MTERSGRGGGTRGASALPSPDYYEQVAHLQQGLRNSEKKRLDLERKLYEYHQSDVCRAKLKYIKLKKYLKEICESEKNARIRNQEYLKQFERIQANITASLEKLQELKIEFETQIKKMQLLSKDSLGKKGELKDEDKEKVVMRAEINSGTAMSRGLYQPATIFMGRQMSAVSGIGDFTTERKSPQPTKNFSIPDPHSHQQTAQSSDVTGSRVVQTPGDTQCLNKSDKIDGKTSLQIGEKTPVTASALSEEEQTHCFEIGSNACQSKSNLSEGKKSAELHSPLWERLSPENRTTDLKCDSSRRSEGSEGEILTREHIEVEEERARPPVSPLSGSESCASENECPQEKPPARKASSDHLPCEDSQSQEPFRKKQEEQEEESLSSSSDLTVSVSEDDLILKSPELQTNLGDTMEQEDGTETLNVIHSEQERDAPSTGKPNCILQAPSTPDSPNESFTNLPAKELCNHSDILREGPDAYRTAVLHQLSQLCPRGGSDKEQVRFEQTPASGLLRTRSGQHIAALKGHDTFVQEEEVAKLSGVFLVSKLDQRTKATALLKKDLAEEHDNRLAVHSSKSSCSLPSTPSDESGIRNGKPTLWPKGVTTREQEDESREESTEESMAARMPITETKAYQRLKQSALQGSTHQAGDGFQEATAPTSQPPGLKTGSGTFKTKTTHKIASEASFSSSEGSPLSRHENEGKLTTNLKSKAFWSESDESNSEIEAALRPRTP</sequence>
<feature type="chain" id="PRO_0000381813" description="Centrosomal protein kizuna">
    <location>
        <begin position="1"/>
        <end position="727"/>
    </location>
</feature>
<feature type="region of interest" description="Disordered" evidence="3">
    <location>
        <begin position="1"/>
        <end position="20"/>
    </location>
</feature>
<feature type="region of interest" description="Disordered" evidence="3">
    <location>
        <begin position="176"/>
        <end position="226"/>
    </location>
</feature>
<feature type="region of interest" description="Disordered" evidence="3">
    <location>
        <begin position="271"/>
        <end position="456"/>
    </location>
</feature>
<feature type="region of interest" description="Disordered" evidence="3">
    <location>
        <begin position="564"/>
        <end position="727"/>
    </location>
</feature>
<feature type="coiled-coil region" evidence="2">
    <location>
        <begin position="77"/>
        <end position="124"/>
    </location>
</feature>
<feature type="compositionally biased region" description="Polar residues" evidence="3">
    <location>
        <begin position="198"/>
        <end position="223"/>
    </location>
</feature>
<feature type="compositionally biased region" description="Basic and acidic residues" evidence="3">
    <location>
        <begin position="286"/>
        <end position="324"/>
    </location>
</feature>
<feature type="compositionally biased region" description="Basic and acidic residues" evidence="3">
    <location>
        <begin position="343"/>
        <end position="359"/>
    </location>
</feature>
<feature type="compositionally biased region" description="Low complexity" evidence="3">
    <location>
        <begin position="380"/>
        <end position="390"/>
    </location>
</feature>
<feature type="compositionally biased region" description="Polar residues" evidence="3">
    <location>
        <begin position="442"/>
        <end position="455"/>
    </location>
</feature>
<feature type="compositionally biased region" description="Low complexity" evidence="3">
    <location>
        <begin position="569"/>
        <end position="583"/>
    </location>
</feature>
<feature type="compositionally biased region" description="Acidic residues" evidence="3">
    <location>
        <begin position="603"/>
        <end position="613"/>
    </location>
</feature>
<feature type="compositionally biased region" description="Polar residues" evidence="3">
    <location>
        <begin position="631"/>
        <end position="642"/>
    </location>
</feature>
<feature type="compositionally biased region" description="Low complexity" evidence="3">
    <location>
        <begin position="659"/>
        <end position="669"/>
    </location>
</feature>
<feature type="compositionally biased region" description="Low complexity" evidence="3">
    <location>
        <begin position="677"/>
        <end position="689"/>
    </location>
</feature>
<feature type="modified residue" description="Phosphoserine" evidence="1">
    <location>
        <position position="328"/>
    </location>
</feature>
<feature type="modified residue" description="Phosphothreonine; by PLK1" evidence="1">
    <location>
        <position position="387"/>
    </location>
</feature>
<feature type="modified residue" description="Phosphoserine" evidence="1">
    <location>
        <position position="711"/>
    </location>
</feature>
<feature type="modified residue" description="Phosphoserine" evidence="1">
    <location>
        <position position="714"/>
    </location>
</feature>
<feature type="modified residue" description="Phosphoserine" evidence="1">
    <location>
        <position position="716"/>
    </location>
</feature>
<reference key="1">
    <citation type="submission" date="2006-10" db="EMBL/GenBank/DDBJ databases">
        <authorList>
            <consortium name="NIH - Mammalian Gene Collection (MGC) project"/>
        </authorList>
    </citation>
    <scope>NUCLEOTIDE SEQUENCE [LARGE SCALE MRNA]</scope>
    <source>
        <strain>Hereford</strain>
        <tissue>Hypothalamus</tissue>
    </source>
</reference>
<dbReference type="EMBL" id="BC126681">
    <property type="protein sequence ID" value="AAI26682.1"/>
    <property type="molecule type" value="mRNA"/>
</dbReference>
<dbReference type="RefSeq" id="NP_001156930.1">
    <property type="nucleotide sequence ID" value="NM_001163458.1"/>
</dbReference>
<dbReference type="SMR" id="A0JNH1"/>
<dbReference type="FunCoup" id="A0JNH1">
    <property type="interactions" value="1612"/>
</dbReference>
<dbReference type="STRING" id="9913.ENSBTAP00000027949"/>
<dbReference type="PaxDb" id="9913-ENSBTAP00000027949"/>
<dbReference type="Ensembl" id="ENSBTAT00000027949.6">
    <property type="protein sequence ID" value="ENSBTAP00000027949.5"/>
    <property type="gene ID" value="ENSBTAG00000020988.7"/>
</dbReference>
<dbReference type="GeneID" id="513688"/>
<dbReference type="KEGG" id="bta:513688"/>
<dbReference type="CTD" id="55857"/>
<dbReference type="VEuPathDB" id="HostDB:ENSBTAG00000020988"/>
<dbReference type="VGNC" id="VGNC:30620">
    <property type="gene designation" value="KIZ"/>
</dbReference>
<dbReference type="eggNOG" id="ENOG502R72X">
    <property type="taxonomic scope" value="Eukaryota"/>
</dbReference>
<dbReference type="GeneTree" id="ENSGT00390000010121"/>
<dbReference type="HOGENOM" id="CLU_026235_0_0_1"/>
<dbReference type="InParanoid" id="A0JNH1"/>
<dbReference type="OMA" id="EKEQTHC"/>
<dbReference type="OrthoDB" id="8015657at2759"/>
<dbReference type="TreeFam" id="TF336086"/>
<dbReference type="Proteomes" id="UP000009136">
    <property type="component" value="Chromosome 13"/>
</dbReference>
<dbReference type="Bgee" id="ENSBTAG00000020988">
    <property type="expression patterns" value="Expressed in spermatid and 108 other cell types or tissues"/>
</dbReference>
<dbReference type="GO" id="GO:0042995">
    <property type="term" value="C:cell projection"/>
    <property type="evidence" value="ECO:0007669"/>
    <property type="project" value="UniProtKB-KW"/>
</dbReference>
<dbReference type="GO" id="GO:0005813">
    <property type="term" value="C:centrosome"/>
    <property type="evidence" value="ECO:0000250"/>
    <property type="project" value="UniProtKB"/>
</dbReference>
<dbReference type="GO" id="GO:0005737">
    <property type="term" value="C:cytoplasm"/>
    <property type="evidence" value="ECO:0007669"/>
    <property type="project" value="UniProtKB-KW"/>
</dbReference>
<dbReference type="GO" id="GO:0019901">
    <property type="term" value="F:protein kinase binding"/>
    <property type="evidence" value="ECO:0007669"/>
    <property type="project" value="Ensembl"/>
</dbReference>
<dbReference type="GO" id="GO:0007051">
    <property type="term" value="P:spindle organization"/>
    <property type="evidence" value="ECO:0000318"/>
    <property type="project" value="GO_Central"/>
</dbReference>
<dbReference type="InterPro" id="IPR026742">
    <property type="entry name" value="Centrosomal_kizuma"/>
</dbReference>
<dbReference type="PANTHER" id="PTHR16299">
    <property type="entry name" value="CENTROSOMAL PROTEIN KIZUNA"/>
    <property type="match status" value="1"/>
</dbReference>
<dbReference type="PANTHER" id="PTHR16299:SF2">
    <property type="entry name" value="CENTROSOMAL PROTEIN KIZUNA"/>
    <property type="match status" value="1"/>
</dbReference>
<evidence type="ECO:0000250" key="1">
    <source>
        <dbReference type="UniProtKB" id="Q2M2Z5"/>
    </source>
</evidence>
<evidence type="ECO:0000255" key="2"/>
<evidence type="ECO:0000256" key="3">
    <source>
        <dbReference type="SAM" id="MobiDB-lite"/>
    </source>
</evidence>
<evidence type="ECO:0000305" key="4"/>
<comment type="function">
    <text evidence="1">Centrosomal protein required for establishing a robust mitotic centrosome architecture that can endure the forces that converge on the centrosomes during spindle formation. Required for stabilizing the expanded pericentriolar material around the centriole (By similarity).</text>
</comment>
<comment type="subunit">
    <text evidence="1">Interacts with AKAP9, CEP72, ODF2, PCNT and TUBGCP2.</text>
</comment>
<comment type="subcellular location">
    <subcellularLocation>
        <location evidence="1">Cytoplasm</location>
        <location evidence="1">Cytoskeleton</location>
        <location evidence="1">Microtubule organizing center</location>
        <location evidence="1">Centrosome</location>
    </subcellularLocation>
    <subcellularLocation>
        <location evidence="1">Cytoplasm</location>
        <location evidence="1">Cytoskeleton</location>
        <location evidence="1">Cilium basal body</location>
    </subcellularLocation>
    <text evidence="1">Localizes to centrosomes throughout the cell cycle. After centrosome duplication, it usually remains associated only with the mother centrosome, containing the older mature centriole and particles surrounding it. During prophase, additional particles accumulate around both separating centrosomes. Does not accumulate at the microtubule minus ends, but instead localizes to the centrosomes and centrosome- surrounding area in a microtubule-independent and dependent manner, respectively.</text>
</comment>
<comment type="PTM">
    <text evidence="1">Phosphorylation at Thr-387 by PLK1 is not needed for centrosomal localization or pericentriolar material expansion but is indispensable for spindle-pole stabilization.</text>
</comment>
<comment type="similarity">
    <text evidence="4">Belongs to the kizuna family.</text>
</comment>
<protein>
    <recommendedName>
        <fullName>Centrosomal protein kizuna</fullName>
    </recommendedName>
    <alternativeName>
        <fullName>Polo-like kinase 1 substrate 1</fullName>
    </alternativeName>
</protein>
<proteinExistence type="evidence at transcript level"/>
<organism>
    <name type="scientific">Bos taurus</name>
    <name type="common">Bovine</name>
    <dbReference type="NCBI Taxonomy" id="9913"/>
    <lineage>
        <taxon>Eukaryota</taxon>
        <taxon>Metazoa</taxon>
        <taxon>Chordata</taxon>
        <taxon>Craniata</taxon>
        <taxon>Vertebrata</taxon>
        <taxon>Euteleostomi</taxon>
        <taxon>Mammalia</taxon>
        <taxon>Eutheria</taxon>
        <taxon>Laurasiatheria</taxon>
        <taxon>Artiodactyla</taxon>
        <taxon>Ruminantia</taxon>
        <taxon>Pecora</taxon>
        <taxon>Bovidae</taxon>
        <taxon>Bovinae</taxon>
        <taxon>Bos</taxon>
    </lineage>
</organism>
<accession>A0JNH1</accession>
<keyword id="KW-0966">Cell projection</keyword>
<keyword id="KW-0175">Coiled coil</keyword>
<keyword id="KW-0963">Cytoplasm</keyword>
<keyword id="KW-0206">Cytoskeleton</keyword>
<keyword id="KW-0597">Phosphoprotein</keyword>
<keyword id="KW-1185">Reference proteome</keyword>
<name>KIZ_BOVIN</name>
<gene>
    <name type="primary">KIZ</name>
    <name type="synonym">PLK1S1</name>
</gene>